<proteinExistence type="inferred from homology"/>
<protein>
    <recommendedName>
        <fullName evidence="1">1-(5-phosphoribosyl)-5-[(5-phosphoribosylamino)methylideneamino] imidazole-4-carboxamide isomerase</fullName>
        <ecNumber evidence="1">5.3.1.16</ecNumber>
    </recommendedName>
    <alternativeName>
        <fullName evidence="1">Phosphoribosylformimino-5-aminoimidazole carboxamide ribotide isomerase</fullName>
    </alternativeName>
</protein>
<gene>
    <name evidence="1" type="primary">hisA</name>
    <name type="ordered locus">Shew_2202</name>
</gene>
<keyword id="KW-0028">Amino-acid biosynthesis</keyword>
<keyword id="KW-0963">Cytoplasm</keyword>
<keyword id="KW-0368">Histidine biosynthesis</keyword>
<keyword id="KW-0413">Isomerase</keyword>
<keyword id="KW-1185">Reference proteome</keyword>
<sequence>MIIPAIDLIEGQVVRLYQGDYAQQTTFDLSPLAQLQAYQAQGATWLHIVDLTGAKDPDRRQTRLIGELVENLEANIQVGGGIRSEAQVKELLDLGVKRVVIGSLAVKQPELVQSWLETYGSDAICLALDVNINQAGEKIVAVSGWQSGGGKTLESLVATFAPYGLKHALVTDISRDGTLQGSNTQLYQEIVARYPDIEWQASGGIATLDDVSAVRNSGASGIIIGKALLINNFTVQEAIACWPNA</sequence>
<dbReference type="EC" id="5.3.1.16" evidence="1"/>
<dbReference type="EMBL" id="CP000606">
    <property type="protein sequence ID" value="ABO24068.1"/>
    <property type="molecule type" value="Genomic_DNA"/>
</dbReference>
<dbReference type="RefSeq" id="WP_011866000.1">
    <property type="nucleotide sequence ID" value="NC_009092.1"/>
</dbReference>
<dbReference type="SMR" id="A3QF20"/>
<dbReference type="STRING" id="323850.Shew_2202"/>
<dbReference type="KEGG" id="slo:Shew_2202"/>
<dbReference type="eggNOG" id="COG0106">
    <property type="taxonomic scope" value="Bacteria"/>
</dbReference>
<dbReference type="HOGENOM" id="CLU_048577_1_2_6"/>
<dbReference type="OrthoDB" id="9807749at2"/>
<dbReference type="UniPathway" id="UPA00031">
    <property type="reaction ID" value="UER00009"/>
</dbReference>
<dbReference type="Proteomes" id="UP000001558">
    <property type="component" value="Chromosome"/>
</dbReference>
<dbReference type="GO" id="GO:0005737">
    <property type="term" value="C:cytoplasm"/>
    <property type="evidence" value="ECO:0007669"/>
    <property type="project" value="UniProtKB-SubCell"/>
</dbReference>
<dbReference type="GO" id="GO:0003949">
    <property type="term" value="F:1-(5-phosphoribosyl)-5-[(5-phosphoribosylamino)methylideneamino]imidazole-4-carboxamide isomerase activity"/>
    <property type="evidence" value="ECO:0007669"/>
    <property type="project" value="UniProtKB-UniRule"/>
</dbReference>
<dbReference type="GO" id="GO:0000105">
    <property type="term" value="P:L-histidine biosynthetic process"/>
    <property type="evidence" value="ECO:0007669"/>
    <property type="project" value="UniProtKB-UniRule"/>
</dbReference>
<dbReference type="GO" id="GO:0000162">
    <property type="term" value="P:L-tryptophan biosynthetic process"/>
    <property type="evidence" value="ECO:0007669"/>
    <property type="project" value="TreeGrafter"/>
</dbReference>
<dbReference type="CDD" id="cd04732">
    <property type="entry name" value="HisA"/>
    <property type="match status" value="1"/>
</dbReference>
<dbReference type="FunFam" id="3.20.20.70:FF:000009">
    <property type="entry name" value="1-(5-phosphoribosyl)-5-[(5-phosphoribosylamino)methylideneamino] imidazole-4-carboxamide isomerase"/>
    <property type="match status" value="1"/>
</dbReference>
<dbReference type="Gene3D" id="3.20.20.70">
    <property type="entry name" value="Aldolase class I"/>
    <property type="match status" value="1"/>
</dbReference>
<dbReference type="HAMAP" id="MF_01014">
    <property type="entry name" value="HisA"/>
    <property type="match status" value="1"/>
</dbReference>
<dbReference type="InterPro" id="IPR013785">
    <property type="entry name" value="Aldolase_TIM"/>
</dbReference>
<dbReference type="InterPro" id="IPR006062">
    <property type="entry name" value="His_biosynth"/>
</dbReference>
<dbReference type="InterPro" id="IPR006063">
    <property type="entry name" value="HisA_bact_arch"/>
</dbReference>
<dbReference type="InterPro" id="IPR044524">
    <property type="entry name" value="Isoase_HisA-like"/>
</dbReference>
<dbReference type="InterPro" id="IPR023016">
    <property type="entry name" value="Isoase_HisA-like_bact"/>
</dbReference>
<dbReference type="InterPro" id="IPR011060">
    <property type="entry name" value="RibuloseP-bd_barrel"/>
</dbReference>
<dbReference type="NCBIfam" id="TIGR00007">
    <property type="entry name" value="1-(5-phosphoribosyl)-5-[(5-phosphoribosylamino)methylideneamino]imidazole-4-carboxamide isomerase"/>
    <property type="match status" value="1"/>
</dbReference>
<dbReference type="PANTHER" id="PTHR43090">
    <property type="entry name" value="1-(5-PHOSPHORIBOSYL)-5-[(5-PHOSPHORIBOSYLAMINO)METHYLIDENEAMINO] IMIDAZOLE-4-CARBOXAMIDE ISOMERASE"/>
    <property type="match status" value="1"/>
</dbReference>
<dbReference type="PANTHER" id="PTHR43090:SF2">
    <property type="entry name" value="1-(5-PHOSPHORIBOSYL)-5-[(5-PHOSPHORIBOSYLAMINO)METHYLIDENEAMINO] IMIDAZOLE-4-CARBOXAMIDE ISOMERASE"/>
    <property type="match status" value="1"/>
</dbReference>
<dbReference type="Pfam" id="PF00977">
    <property type="entry name" value="His_biosynth"/>
    <property type="match status" value="1"/>
</dbReference>
<dbReference type="SUPFAM" id="SSF51366">
    <property type="entry name" value="Ribulose-phoshate binding barrel"/>
    <property type="match status" value="1"/>
</dbReference>
<comment type="catalytic activity">
    <reaction evidence="1">
        <text>1-(5-phospho-beta-D-ribosyl)-5-[(5-phospho-beta-D-ribosylamino)methylideneamino]imidazole-4-carboxamide = 5-[(5-phospho-1-deoxy-D-ribulos-1-ylimino)methylamino]-1-(5-phospho-beta-D-ribosyl)imidazole-4-carboxamide</text>
        <dbReference type="Rhea" id="RHEA:15469"/>
        <dbReference type="ChEBI" id="CHEBI:58435"/>
        <dbReference type="ChEBI" id="CHEBI:58525"/>
        <dbReference type="EC" id="5.3.1.16"/>
    </reaction>
</comment>
<comment type="pathway">
    <text evidence="1">Amino-acid biosynthesis; L-histidine biosynthesis; L-histidine from 5-phospho-alpha-D-ribose 1-diphosphate: step 4/9.</text>
</comment>
<comment type="subcellular location">
    <subcellularLocation>
        <location evidence="1">Cytoplasm</location>
    </subcellularLocation>
</comment>
<comment type="similarity">
    <text evidence="1">Belongs to the HisA/HisF family.</text>
</comment>
<organism>
    <name type="scientific">Shewanella loihica (strain ATCC BAA-1088 / PV-4)</name>
    <dbReference type="NCBI Taxonomy" id="323850"/>
    <lineage>
        <taxon>Bacteria</taxon>
        <taxon>Pseudomonadati</taxon>
        <taxon>Pseudomonadota</taxon>
        <taxon>Gammaproteobacteria</taxon>
        <taxon>Alteromonadales</taxon>
        <taxon>Shewanellaceae</taxon>
        <taxon>Shewanella</taxon>
    </lineage>
</organism>
<feature type="chain" id="PRO_0000290537" description="1-(5-phosphoribosyl)-5-[(5-phosphoribosylamino)methylideneamino] imidazole-4-carboxamide isomerase">
    <location>
        <begin position="1"/>
        <end position="245"/>
    </location>
</feature>
<feature type="active site" description="Proton acceptor" evidence="1">
    <location>
        <position position="7"/>
    </location>
</feature>
<feature type="active site" description="Proton donor" evidence="1">
    <location>
        <position position="129"/>
    </location>
</feature>
<evidence type="ECO:0000255" key="1">
    <source>
        <dbReference type="HAMAP-Rule" id="MF_01014"/>
    </source>
</evidence>
<name>HIS4_SHELP</name>
<reference key="1">
    <citation type="submission" date="2007-03" db="EMBL/GenBank/DDBJ databases">
        <title>Complete sequence of Shewanella loihica PV-4.</title>
        <authorList>
            <consortium name="US DOE Joint Genome Institute"/>
            <person name="Copeland A."/>
            <person name="Lucas S."/>
            <person name="Lapidus A."/>
            <person name="Barry K."/>
            <person name="Detter J.C."/>
            <person name="Glavina del Rio T."/>
            <person name="Hammon N."/>
            <person name="Israni S."/>
            <person name="Dalin E."/>
            <person name="Tice H."/>
            <person name="Pitluck S."/>
            <person name="Chain P."/>
            <person name="Malfatti S."/>
            <person name="Shin M."/>
            <person name="Vergez L."/>
            <person name="Schmutz J."/>
            <person name="Larimer F."/>
            <person name="Land M."/>
            <person name="Hauser L."/>
            <person name="Kyrpides N."/>
            <person name="Mikhailova N."/>
            <person name="Romine M.F."/>
            <person name="Serres G."/>
            <person name="Fredrickson J."/>
            <person name="Tiedje J."/>
            <person name="Richardson P."/>
        </authorList>
    </citation>
    <scope>NUCLEOTIDE SEQUENCE [LARGE SCALE GENOMIC DNA]</scope>
    <source>
        <strain>ATCC BAA-1088 / PV-4</strain>
    </source>
</reference>
<accession>A3QF20</accession>